<reference key="1">
    <citation type="journal article" date="2008" name="J. Bacteriol.">
        <title>Genome sequence of Staphylococcus aureus strain Newman and comparative analysis of staphylococcal genomes: polymorphism and evolution of two major pathogenicity islands.</title>
        <authorList>
            <person name="Baba T."/>
            <person name="Bae T."/>
            <person name="Schneewind O."/>
            <person name="Takeuchi F."/>
            <person name="Hiramatsu K."/>
        </authorList>
    </citation>
    <scope>NUCLEOTIDE SEQUENCE [LARGE SCALE GENOMIC DNA]</scope>
    <source>
        <strain>Newman</strain>
    </source>
</reference>
<proteinExistence type="inferred from homology"/>
<comment type="caution">
    <text evidence="3">In strains Mu3, Mu50, N315 and Newman, ebh is divided into two ORFs, ebhA and ebhB, which correspond to the C-terminal and N-terminal parts of the full gene, respectively.</text>
</comment>
<accession>A6QGY5</accession>
<protein>
    <recommendedName>
        <fullName>Extracellular matrix-binding protein EbhB</fullName>
    </recommendedName>
    <alternativeName>
        <fullName>ECM-binding protein homolog B</fullName>
    </alternativeName>
</protein>
<gene>
    <name type="primary">ebhB</name>
    <name type="ordered locus">NWMN_1345</name>
</gene>
<organism>
    <name type="scientific">Staphylococcus aureus (strain Newman)</name>
    <dbReference type="NCBI Taxonomy" id="426430"/>
    <lineage>
        <taxon>Bacteria</taxon>
        <taxon>Bacillati</taxon>
        <taxon>Bacillota</taxon>
        <taxon>Bacilli</taxon>
        <taxon>Bacillales</taxon>
        <taxon>Staphylococcaceae</taxon>
        <taxon>Staphylococcus</taxon>
    </lineage>
</organism>
<sequence length="7031" mass="752580">MNYRDKIQKFSIRKYTVGTFSTVIATLVFLGFNTSQAHAAETNQPASVVKQKQQSNNEQTENRESQVQNSQNSQNGQSLSATHENEQPNISQANLVDQKVAQSSTTNDEQPASQNVNTKKDSATAATTQPDKEQSKHKQNESQSANKNGNDNRAAHVENHEANVVTASDSSDNGNVQHDRNELQAFFDANYHDYRFIDRENADSGTFNYVKGIFDKINTLLGSNDPINNKDLQLAYKELEQAVALIRTMPQRQQTSRRSNRIQTRSVESRAAEPRSVSDYQNANSSYYVENANDGSGYPVGTYINASSKGAPYNLPTTPWNTLKASDSKEIALMTAKQTGDGYQWVIKFNKGHAPHQNMIFWFALPADQVPVGRTDFVTVNSDGTNVQWSHGAGAGANKPLQQMWEYGVNDPHRSHDFKIRNRSGQVIYDWPTVHIYSLEDLSRASDYFSEAGATPATKAFGRQNFEYINGQKPAESPGVPKVYTFIGQGDASYTISFKTQGPTVNKLYYAAGGRALEYNQLFMYSQLYVESTQDHQQRLNGLRQVVNRTYRIGTTKRVEVSQGNVQTKKVLESTNLNIDDFVDDPLSYVKTPSNKVLGFYSNNANTNAFRPGGAQQLNEYQLSQLFTDQKLQEAARTRNPIRLMIGFDYPDAYGNSETLVPVNLTVLPEIQHNIKFFKNDDTQNIAEKPFSKQAGHPVFYVYAGNQGNASVNLGGSVTSIQPLRINLTSNENFTDKDWQITGIPRTLHIENSTNRPNNARERNIELVGNLLPGDYFGTIRFGRKEQLFEIRVKPHTPTITTTAEQLRGTALQKVPVNISGIPLDPSALVYLVAPTNQTTNGGSEADQIPSGYTILATGTPDGVHNTITIRPQDYVVFIPPVGKQIRAVVYYNKVVASNMSNAVTILPDDIPPTINNPVGINAKYYRGDEVNFTMGVSDRHSGIKNTTITTLPNGWTSNLTKADKNNGSLSITGRVSMNQAFNSDITFKVSATDNVNNTTNDSQSKHVSIHVGKISEDAHPIVLGNTEKVVVVNPTAVSNDEKQSIITAFMNKNQNIRGYLASTDPVTVDNNGNVTLHYRDGSSTTLDATNVMTYEPVVKPEYQTVNAAKTATVTIAKGQSFSIGDIKQYFTLSNGQPIPSGTFTNITSDRTIPTAQEVSQMNAGTQLYHITATNAYHKDSEDFYISLKIIDVKQPEGDQRVYRTSTYDLTTDEISKVKQAFINANRDVITLAEGDISVTNTPNGANVSTITVNINKGRLTKSFASNLANMNFLRWVNFPQDYTVTWTNAKIANRPTDGGLSWSDDHKSLIYRYDATLGTQITTNDILTMLKATTTVPGLRNNITGNEKSQAEAGGRPNFRTTGYSQSNATTDGQRQFTLNGQVIQVLDIINPSNGYGGQPVTNSNTRANHSNSTVVNVNEPAANGAGAFTIDHVVKSNSTHNASDAVYKAQLYLTPYGPKQYVEHLNQNTGNTTDAINIYFVPSDLVNPTISVGNYTNHQVFSGETFTNTITANDNFGVQSVTVPNTSQITGTVDNNHQHVSATAPNVTSATNKTINLLATDTSGNTATTSFNVTVKPLRDKYRVGTSSTAANPVRIANISNNATVSQADQTTIINSLTFTETVPNRSYARASANEITSKTVSNVSRTGNNANVTVTVTYQDGTTSTVTVPVKHVIPEIVAHSHYTVQGQDFPAGNGSSASDYFKLSNGSDIADATITWVSGQAPNKDNTRIGEDITVTAHILIDGETTPITKTATYKVVRTVPKHVFETARGVLYPGVSDMYDAKQYVKPVNNSWSTNAQHMNFQFVGTYGPNKDVVGISTRLIRVTYDNRQTEDLTILSKVKPDPPRIDANSVTYKAGLTNQEIKVNNVLNNSSVKLFKADNTPLNVTNITHGSGFSSVVTVSDALPNGGIKAKSSISMNNVTYTTQDEHGQVVTVTRNESVDSNDSATVTVTPQLQATTEGAVFIKGGDGFDFGHVERFIQNPPHGATVAWHDSPDTWKNTVGNTHKTAVVTLPNGQGTRNVEVPVKVYPVANAKAPSRDVKGQNLTNGTDAMNYITFDPNTNTNGITAAWANRQQPNNQQAGVQHLNVDVTYPGISAAKRVPVTVNVYQFEFPQTTYTTTVGGTLASGTQASGYAHMQNATGLPTDGFTYKWNRDTTGTNDANWSAMNKPNVAKVVNAKYDVIYNGHTFATSLPAKFVVKDVQPAKPTVTETAAGAITIAPGANQTVNTHAGNVTTYADKLVIKRNGNVVTTFTRRNNTSPWVKEASAATVAGIAGTNNGITVAAGTFNPADTIQVVATQGSGETVSDEQRSDDFTVVAPQPNQATTKIWQNGHIDITPNNPSGHLINPTQAMDIAYTEKVGNGAEHSKTINVVRGQNNQWTIANKPDYVTLDAQTGKVTFNANTIKPNSSITITPKAGTGHSVSSNPSTLTAPAAHTVNTTEIVKDYGSNVTAAEINNAVQVANKRTATIKNGTAMPTNLAGGSTTTIPVTVTYNDGSTEEVQESIFTKADKRELITAKNHLDDPVSTEGKKPGTITQYNNAMHNAQQQINTAKTEAQQVINNERATPQQVSDALTKVRAAQTKIDQAKALLQNKEDNSQLVTSKNNLQSSVNQVPSTAGMTQQSIDNYNAKKREAETEITAAQRVIDNGDATAQQISDEKHRVDNALTALNQAKHDLTADTHALEQAVQQLNRTGTTTGKKPASITAYNNSIRALQSDLTSAKNSANAIIQKPIRTVQEVQSALTNVNRVNERLTQAINQLVPLADNSALKTAKTKLDEEINKSVTTDGMTQSSIQAYENAKRAGQTESTNAQNVINNGDATDQQIAAEKTKVEEKYNSLKQAIAGLTPDLAPLQTAKTQLQNDIDQPTSTTGMTSASIAAFNEKLSAARTKIQEIDRVLASHPDVATIRQNVTAANAAKSALDQARNGLTVDKAPLENAKNQLQHSIDTQTSTTGMTQDSINAYNAKLTAARNKIQQINQVLAGSPTVEQINTNTSTANQAKSDLDHARQALTPDKAPLQTAKTQLEQSINQPTDTTGMTTASLNAYNQKLQAARQKLTEINQVLNGNPTVQNINDKVTEANQAKDQLNTARQGLTLDRQPALTTLHGASNLNQAQQNNFTQQINAAQNHAALETIKSNITALNTAMTKLKDSVADNNTIKSDQNYTDATPANKQAYDNAVNAAKGVIGETTNPTMDVNTVNQKAASVKSTKDALDGQQNLQRAKTEATNAITHASDLNQAQKNALTQQVNSAQNVQAVNDIKQTTQSLNTAMTGLKRGVANHNQVVQSDNYVNADTNKKNDYNNAYNHANDIINGNAQHPVITPSDVNNALSNVTSKEHALNGEAKLNAAKQEANTALGHLNNLNNAQRQNLQSQINGAHQIDAVNTIKQNATNLNSAMGNLRQAVADKDQVKRTEDYADADTAKQNAYNSAVSSAETIINQTTNPTMSVDDVNRATSAVTSNKNALNGYEKLAQSKTDAARAIDALPHLNNAQKADVKSKINAASNIAGVNTVKQQGTDLNTAMGNLQGAINDEQTTLNSQNYQDATPSKKTAYTNAVQAAKDILNKSNGQNKTKDQVTEAMNQVNSAKNNLDGTRLLDQAKQTAKQQLNNMTHLTTAQKTNLTNQINSGTTVAGVQTVQSNANTLDQAMNTLRQSIANKDATKASEDYVDANNDKQTAYNNAVAAAETIINANSNPEMNPSTITQKAEQVNSSKTALNGDENLAAAKQNAKTYLNTLTSITDAQKNNLISQITSATRVSGVDTVKQNAQHLDQAMASLQNGINNESQVKSSEKYRDADTNKQQEYDNAITAAKAILNKSTGPNTAQNAVEAALQRVNNAKDALNGDAKLIAAQNAAKQHLGTLTHITTAQRNDLTNQISQATNLAGVESVKQNANSLDGAMGNLQTAINDKSGTLASQNFLDADEQKRNAYNQAVSAAETILNKQTGPNTAKTAVEQALNNVNNAKHALNGTQNLNNAKQAAITAINGASDLNQKQKDALKAQANGAQRVSNAQDVQHNATELNTAMGTLKHAIADKTNTLASSKYVNADSTKQNAYTTKVTNAEHIISGTPTVVTTPSEVTAAANQVNSAKQELNGDERLREAKQNANTAIDALTQLNTPQKAKLKEQVGQANRLEDVQTVQTNGQALNNAMKGLRDSIANETTVKTSQNYTDASPNNQSTYNSAVSNAKGIINQTNNPTMDTSAITQATTQVNNAKNGLNGAENLRNAQNTAKQNLNTLSHLTNNQKSAISSQIDRAGHVSEVTATKNAATELNTQMGNLEQAIHDQNTVKQSVKFTDADKAKRDAYTNAVSRAEAILNKTQGANTSKQDVEAAIQNVSSAKNALNGDQNVTNAKNAAKNALNNLTSINNAQKRDLTTKIDQATTVAGVEAVSNTSTQLNTAMANLQNGINDKTNTLASENYHDADSDKKTAYTQAVTNAENILNKNSGSNLDKTAVENALSQVANAKGALNGNHNLEQAKSNANTTINGLQHLTTAQKDKLKQQVQQAQNVAGVDTVKSSANTLNGAMGTLRNSIQDNTATKNGQNYLDATERNKTNYNNAVDSANGVINATSNPNMDANAINQIATQVTSTKNALDGTHNLTQAKQTATNAIDGATNLNKAQKDALKAQVTSAQRVANVTSIQQTANELNTAMGQLQHGIDDENATKQTQKYRDAEQSKKTAYDQAVAAAKAILNKQTGSNSDKAAVDRALQQVTSTKDALNGDAKLAEAKAAAKQNLGTLNHITNAQRTDLEGQINQATTVDGVNTVKTNANTLDGAMNSLQGSINDKDATLRNQNYLDADESKRNAYTQAVTAAEGILNKQTGGNTSKADVDNALNAVTRAKAALNGADNLRNAKTSATNTIDGLPNLTQLQKDNLKHQVEQAQNVAGVNGVKDKGNTLNTAMGALRTSIQNDNTTKTSQNYLDASDSNKNNYNTAVNNANGVINATNNPNMDANAINGMANQVNTTKAALNGAQNLAQAKTNATNTINNAHDLNQKQKDALKTQVNNAQRVSDANNVQHTATELNSAMTALKAAIADKERTKASGNYVNADQEKRQAYDSKVTNAENIISGTPNATLTVNDVNSAASQVNAAKTALNGDNNLRVAKEHANNTIDGLAQLNNAQKAKLKEQVQSATTLDGVQTVKNSSQTLNTAMKGLRDSIANEATIKAGQNYTDASPNNRNEYDSAVTAAKAIINQTSNPTMEPNTITQVTSQVTTKEQALNGARNLAQAKTTAKNNLNNLTSINNAQKDALTRSIDGATTVAGVNQETAKATELNNAMHSLQNGINDETQTKQTQKYLDAEPSKKSAYDQAVNAAKAILTKASGQNVDKAAVEQALQNVNSTKTALNGDAKLNEAKAAAKQTLGTLTHINNAQRTALDNEITQATNVEGVNTVKAKAQQLDGAMGQLETSIRDKDTTLQSQNYQDADDAKRTAYSQAVNAAATILNKTAGGNTPKADVERAMQAVTQANTALNGIQNLDRAKQAANTAITNASDLNTKQKEALKAQVTSAGRVSAANGVEHTATELNTAMTALKRAIADKAETKASGNYVNADANKRQAYDEKVTAAENIVSGTPTPTLTPADVTNAATQVTNAKTQLNGNHNLEVAKQNANTAIDGLTSLNGPQKAKLKEQVGQATTLPNVQTVRDNAQTLNTAMKGLRDSIANEATIKAGQNYTDASQNKQTDYNSAVTAAKAIIGQTTSPSMNAQEINQAKDQVTAKQQALNGQENLRTAQTNAKQHLNGLSDLTDAQKDAVKRQIEGATHVNEVTQAQNNADALNTAMTNLKNGIQDQNTIKQGVNFTDADEAKRNAYTNAVTQAEQILNKAQGPNTSKDGVETALENVQRAKNELNGNQNVANAKTTAKNALNNLTSINNAQKEALKSQIEGATTVAGVNQVSTTASELNTAMSNLQNGINDEAATKAAQKYTDADREKQTAYNDAVTAAKTLLDKTAGSNDNKAAVEQALQRVNTAKTALNGDERLNEAKNTAKQQVATMSHLTDAQKANLTSQIESGTTVAGVQGIQANAGTLDQAMNQLRQSIASKDATKSSEDYQDANADLQNAYNDAVTNAEGIISATNNPEMNPDTINQKASQVNSAKSALNGDEKLAAAKQTAKSDIGRLTDLNNAQRTAANAEVDQAPNLAAVTAAKNKATSLNTAMGNLKHALAEKDNTKRSVNYTDADQPKQQAYDTAVTQAEAITNANGSNANETQVQAALNQLNQAKNDLNGDNKVAQAKESAKRALASYSNLNNAQSTAATSQIDNATTVAGVTAAQNTANELNTAMGQLQNGINDQNTVKQQVNFTDADQGKKDAYTNAVTNAQGILDKAHGQNMTKAQVEAALNQVTTAKNALNGDANVRQAKSDAKANLGTLTHLNNAQKQDLTSQIEGATTVNGVNGVKTKAQDLDGAMQRLQSAIANKDQTKASENYIDADPTKKTAFDNAITQAESYLNKDHGANKDKQAVEQAIQSVTSTENALNGDANLQRAKTEAIQAIDNLTHLNTPQKTALKQQVNAAQRVSGVTDLKNSATSLNNAMDQLKQAIADHDTIVASGNYTNASPDKQGAYTDAYNAAKNIVNGSPNVITNAADVTAATQRVNNAETGLNGDTNLATAKQQAKDALRQMTHLSDAQKQSITGQIDSATQVTGVQSVKDNATNLDNAMNQLRNSIANKDDVKASQPYVDADRDKQNAYNTAVTNAENIINATSQPTLDPSAVTQAANQVSTNKTALNGAQNLANKKQETTANINQLSHLNNAQKQDLNTQVTNAPNISTVNQVKTKAEQLDQAMERLINGIQDKDQVKQSVNFTDADPEKQTAYNNAVTAAENIINQANGTNANQSQVEAALSTVTTTKQALNGDRKVTDAKNNANQTLSTLDNLNNAQKGAVTGNINQAHTVAEVTQAIQTAQELNTAMGNLKNSLNDKDTTLGSQNFADADPEKKNAYNEAVHNAENILNKSTGTNVPKDQVEAAMNQVNATKAALNGTQNLEKAKQHANTAIDGLSHLTNAQK</sequence>
<keyword id="KW-0677">Repeat</keyword>
<keyword id="KW-0732">Signal</keyword>
<feature type="signal peptide" evidence="1">
    <location>
        <begin position="1"/>
        <end position="39"/>
    </location>
</feature>
<feature type="chain" id="PRO_0000345975" description="Extracellular matrix-binding protein EbhB">
    <location>
        <begin position="40"/>
        <end position="7031"/>
    </location>
</feature>
<feature type="domain" description="FIVAR 1">
    <location>
        <begin position="2524"/>
        <end position="2580"/>
    </location>
</feature>
<feature type="domain" description="FIVAR 2">
    <location>
        <begin position="2610"/>
        <end position="2666"/>
    </location>
</feature>
<feature type="domain" description="FIVAR 3">
    <location>
        <begin position="2687"/>
        <end position="2750"/>
    </location>
</feature>
<feature type="domain" description="FIVAR 4">
    <location>
        <begin position="2780"/>
        <end position="2836"/>
    </location>
</feature>
<feature type="domain" description="FIVAR 5">
    <location>
        <begin position="2864"/>
        <end position="2919"/>
    </location>
</feature>
<feature type="domain" description="FIVAR 6">
    <location>
        <begin position="2947"/>
        <end position="3002"/>
    </location>
</feature>
<feature type="domain" description="FIVAR 7">
    <location>
        <begin position="3030"/>
        <end position="3085"/>
    </location>
</feature>
<feature type="domain" description="FIVAR 8">
    <location>
        <begin position="3154"/>
        <end position="3212"/>
    </location>
</feature>
<feature type="domain" description="FIVAR 9">
    <location>
        <begin position="3280"/>
        <end position="3339"/>
    </location>
</feature>
<feature type="domain" description="FIVAR 10">
    <location>
        <begin position="3407"/>
        <end position="3465"/>
    </location>
</feature>
<feature type="domain" description="FIVAR 11">
    <location>
        <begin position="3533"/>
        <end position="3591"/>
    </location>
</feature>
<feature type="domain" description="FIVAR 12">
    <location>
        <begin position="3659"/>
        <end position="3717"/>
    </location>
</feature>
<feature type="domain" description="FIVAR 13">
    <location>
        <begin position="3785"/>
        <end position="3843"/>
    </location>
</feature>
<feature type="domain" description="FIVAR 14">
    <location>
        <begin position="3911"/>
        <end position="3969"/>
    </location>
</feature>
<feature type="domain" description="FIVAR 15">
    <location>
        <begin position="4037"/>
        <end position="4095"/>
    </location>
</feature>
<feature type="domain" description="FIVAR 16">
    <location>
        <begin position="4163"/>
        <end position="4221"/>
    </location>
</feature>
<feature type="domain" description="FIVAR 17">
    <location>
        <begin position="4289"/>
        <end position="4347"/>
    </location>
</feature>
<feature type="domain" description="FIVAR 18">
    <location>
        <begin position="4415"/>
        <end position="4473"/>
    </location>
</feature>
<feature type="domain" description="FIVAR 19">
    <location>
        <begin position="4541"/>
        <end position="4599"/>
    </location>
</feature>
<feature type="domain" description="FIVAR 20">
    <location>
        <begin position="4667"/>
        <end position="4725"/>
    </location>
</feature>
<feature type="domain" description="FIVAR 21">
    <location>
        <begin position="4793"/>
        <end position="4851"/>
    </location>
</feature>
<feature type="domain" description="FIVAR 22">
    <location>
        <begin position="4919"/>
        <end position="4977"/>
    </location>
</feature>
<feature type="domain" description="FIVAR 23">
    <location>
        <begin position="5045"/>
        <end position="5103"/>
    </location>
</feature>
<feature type="domain" description="FIVAR 24">
    <location>
        <begin position="5171"/>
        <end position="5229"/>
    </location>
</feature>
<feature type="domain" description="FIVAR 25">
    <location>
        <begin position="5297"/>
        <end position="5355"/>
    </location>
</feature>
<feature type="domain" description="FIVAR 26">
    <location>
        <begin position="5423"/>
        <end position="5481"/>
    </location>
</feature>
<feature type="domain" description="FIVAR 27">
    <location>
        <begin position="5549"/>
        <end position="5607"/>
    </location>
</feature>
<feature type="domain" description="FIVAR 28">
    <location>
        <begin position="5675"/>
        <end position="5733"/>
    </location>
</feature>
<feature type="domain" description="FIVAR 29">
    <location>
        <begin position="5801"/>
        <end position="5859"/>
    </location>
</feature>
<feature type="domain" description="FIVAR 30">
    <location>
        <begin position="5927"/>
        <end position="5985"/>
    </location>
</feature>
<feature type="domain" description="FIVAR 31">
    <location>
        <begin position="6053"/>
        <end position="6111"/>
    </location>
</feature>
<feature type="domain" description="FIVAR 32">
    <location>
        <begin position="6179"/>
        <end position="6236"/>
    </location>
</feature>
<feature type="domain" description="FIVAR 33">
    <location>
        <begin position="6304"/>
        <end position="6362"/>
    </location>
</feature>
<feature type="domain" description="FIVAR 34">
    <location>
        <begin position="6430"/>
        <end position="6488"/>
    </location>
</feature>
<feature type="domain" description="FIVAR 35">
    <location>
        <begin position="6556"/>
        <end position="6614"/>
    </location>
</feature>
<feature type="domain" description="FIVAR 36">
    <location>
        <begin position="6682"/>
        <end position="6740"/>
    </location>
</feature>
<feature type="domain" description="FIVAR 37">
    <location>
        <begin position="6818"/>
        <end position="6866"/>
    </location>
</feature>
<feature type="domain" description="FIVAR 38">
    <location>
        <begin position="6934"/>
        <end position="6992"/>
    </location>
</feature>
<feature type="region of interest" description="Disordered" evidence="2">
    <location>
        <begin position="41"/>
        <end position="86"/>
    </location>
</feature>
<feature type="region of interest" description="Disordered" evidence="2">
    <location>
        <begin position="99"/>
        <end position="152"/>
    </location>
</feature>
<feature type="region of interest" description="Disordered" evidence="2">
    <location>
        <begin position="250"/>
        <end position="277"/>
    </location>
</feature>
<feature type="region of interest" description="Disordered" evidence="2">
    <location>
        <begin position="1342"/>
        <end position="1373"/>
    </location>
</feature>
<feature type="region of interest" description="Disordered" evidence="2">
    <location>
        <begin position="2418"/>
        <end position="2438"/>
    </location>
</feature>
<feature type="compositionally biased region" description="Polar residues" evidence="2">
    <location>
        <begin position="41"/>
        <end position="59"/>
    </location>
</feature>
<feature type="compositionally biased region" description="Low complexity" evidence="2">
    <location>
        <begin position="65"/>
        <end position="80"/>
    </location>
</feature>
<feature type="compositionally biased region" description="Polar residues" evidence="2">
    <location>
        <begin position="99"/>
        <end position="117"/>
    </location>
</feature>
<feature type="compositionally biased region" description="Basic and acidic residues" evidence="2">
    <location>
        <begin position="130"/>
        <end position="140"/>
    </location>
</feature>
<feature type="compositionally biased region" description="Polar residues" evidence="2">
    <location>
        <begin position="141"/>
        <end position="151"/>
    </location>
</feature>
<feature type="compositionally biased region" description="Polar residues" evidence="2">
    <location>
        <begin position="250"/>
        <end position="266"/>
    </location>
</feature>
<feature type="compositionally biased region" description="Polar residues" evidence="2">
    <location>
        <begin position="1360"/>
        <end position="1373"/>
    </location>
</feature>
<feature type="compositionally biased region" description="Polar residues" evidence="2">
    <location>
        <begin position="2427"/>
        <end position="2438"/>
    </location>
</feature>
<evidence type="ECO:0000255" key="1"/>
<evidence type="ECO:0000256" key="2">
    <source>
        <dbReference type="SAM" id="MobiDB-lite"/>
    </source>
</evidence>
<evidence type="ECO:0000305" key="3"/>
<dbReference type="EMBL" id="AP009351">
    <property type="protein sequence ID" value="BAF67617.1"/>
    <property type="molecule type" value="Genomic_DNA"/>
</dbReference>
<dbReference type="SMR" id="A6QGY5"/>
<dbReference type="KEGG" id="sae:NWMN_1345"/>
<dbReference type="HOGENOM" id="CLU_000047_2_0_9"/>
<dbReference type="Proteomes" id="UP000006386">
    <property type="component" value="Chromosome"/>
</dbReference>
<dbReference type="Gene3D" id="3.10.20.890">
    <property type="match status" value="1"/>
</dbReference>
<dbReference type="Gene3D" id="1.20.120.1850">
    <property type="entry name" value="Ebh helix bundles repeating unit (S and A modules)"/>
    <property type="match status" value="2"/>
</dbReference>
<dbReference type="Gene3D" id="1.20.5.420">
    <property type="entry name" value="Immunoglobulin FC, subunit C"/>
    <property type="match status" value="60"/>
</dbReference>
<dbReference type="InterPro" id="IPR044024">
    <property type="entry name" value="aRib"/>
</dbReference>
<dbReference type="InterPro" id="IPR026361">
    <property type="entry name" value="Ebh_dom"/>
</dbReference>
<dbReference type="InterPro" id="IPR051197">
    <property type="entry name" value="ECM-binding_protein"/>
</dbReference>
<dbReference type="InterPro" id="IPR020840">
    <property type="entry name" value="Extracell_matrix-bd_GA"/>
</dbReference>
<dbReference type="InterPro" id="IPR002988">
    <property type="entry name" value="GA_module"/>
</dbReference>
<dbReference type="InterPro" id="IPR009063">
    <property type="entry name" value="Ig/albumin-bd_sf"/>
</dbReference>
<dbReference type="InterPro" id="IPR005877">
    <property type="entry name" value="YSIRK_signal_dom"/>
</dbReference>
<dbReference type="NCBIfam" id="TIGR04264">
    <property type="entry name" value="hyperosmo_Ebh"/>
    <property type="match status" value="1"/>
</dbReference>
<dbReference type="NCBIfam" id="TIGR01168">
    <property type="entry name" value="YSIRK_signal"/>
    <property type="match status" value="1"/>
</dbReference>
<dbReference type="PANTHER" id="PTHR33150">
    <property type="entry name" value="EXTRACELLULAR MATRIX-BINDING PROTEIN EBH"/>
    <property type="match status" value="1"/>
</dbReference>
<dbReference type="PANTHER" id="PTHR33150:SF1">
    <property type="entry name" value="EXTRACELLULAR MATRIX-BINDING PROTEIN EBH"/>
    <property type="match status" value="1"/>
</dbReference>
<dbReference type="Pfam" id="PF18938">
    <property type="entry name" value="aRib"/>
    <property type="match status" value="1"/>
</dbReference>
<dbReference type="Pfam" id="PF07554">
    <property type="entry name" value="FIVAR"/>
    <property type="match status" value="36"/>
</dbReference>
<dbReference type="Pfam" id="PF01468">
    <property type="entry name" value="GA"/>
    <property type="match status" value="4"/>
</dbReference>
<dbReference type="Pfam" id="PF04650">
    <property type="entry name" value="YSIRK_signal"/>
    <property type="match status" value="1"/>
</dbReference>
<dbReference type="SMART" id="SM00844">
    <property type="entry name" value="GA"/>
    <property type="match status" value="32"/>
</dbReference>
<dbReference type="SUPFAM" id="SSF46997">
    <property type="entry name" value="Bacterial immunoglobulin/albumin-binding domains"/>
    <property type="match status" value="62"/>
</dbReference>
<name>EBHB_STAAE</name>